<keyword id="KW-0002">3D-structure</keyword>
<keyword id="KW-0378">Hydrolase</keyword>
<keyword id="KW-0596">Phosphopantetheine</keyword>
<keyword id="KW-0597">Phosphoprotein</keyword>
<keyword id="KW-1185">Reference proteome</keyword>
<proteinExistence type="evidence at protein level"/>
<dbReference type="EC" id="3.3.2.1"/>
<dbReference type="EMBL" id="U52150">
    <property type="protein sequence ID" value="AAC45926.1"/>
    <property type="molecule type" value="Genomic_DNA"/>
</dbReference>
<dbReference type="EMBL" id="AE003852">
    <property type="protein sequence ID" value="AAF93936.1"/>
    <property type="molecule type" value="Genomic_DNA"/>
</dbReference>
<dbReference type="PIR" id="G82282">
    <property type="entry name" value="G82282"/>
</dbReference>
<dbReference type="RefSeq" id="NP_230420.1">
    <property type="nucleotide sequence ID" value="NC_002505.1"/>
</dbReference>
<dbReference type="RefSeq" id="WP_000997093.1">
    <property type="nucleotide sequence ID" value="NZ_LT906614.1"/>
</dbReference>
<dbReference type="PDB" id="3TB4">
    <property type="method" value="X-ray"/>
    <property type="resolution" value="1.35 A"/>
    <property type="chains" value="A=1-215"/>
</dbReference>
<dbReference type="PDB" id="3TG2">
    <property type="method" value="X-ray"/>
    <property type="resolution" value="1.10 A"/>
    <property type="chains" value="A=1-215"/>
</dbReference>
<dbReference type="PDBsum" id="3TB4"/>
<dbReference type="PDBsum" id="3TG2"/>
<dbReference type="SMR" id="P0C6D3"/>
<dbReference type="STRING" id="243277.VC_0771"/>
<dbReference type="DNASU" id="2615314"/>
<dbReference type="EnsemblBacteria" id="AAF93936">
    <property type="protein sequence ID" value="AAF93936"/>
    <property type="gene ID" value="VC_0771"/>
</dbReference>
<dbReference type="KEGG" id="vch:VC_0771"/>
<dbReference type="PATRIC" id="fig|243277.26.peg.735"/>
<dbReference type="eggNOG" id="COG1535">
    <property type="taxonomic scope" value="Bacteria"/>
</dbReference>
<dbReference type="eggNOG" id="COG3433">
    <property type="taxonomic scope" value="Bacteria"/>
</dbReference>
<dbReference type="HOGENOM" id="CLU_068979_2_0_6"/>
<dbReference type="BioCyc" id="MetaCyc:FY484_RS04015-MONOMER"/>
<dbReference type="BRENDA" id="3.3.2.1">
    <property type="organism ID" value="6626"/>
</dbReference>
<dbReference type="UniPathway" id="UPA00022"/>
<dbReference type="EvolutionaryTrace" id="P0C6D3"/>
<dbReference type="Proteomes" id="UP000000584">
    <property type="component" value="Chromosome 1"/>
</dbReference>
<dbReference type="GO" id="GO:0008908">
    <property type="term" value="F:isochorismatase activity"/>
    <property type="evidence" value="ECO:0007669"/>
    <property type="project" value="UniProtKB-EC"/>
</dbReference>
<dbReference type="GO" id="GO:0019537">
    <property type="term" value="P:vibriobactin biosynthetic process"/>
    <property type="evidence" value="ECO:0007669"/>
    <property type="project" value="UniProtKB-UniPathway"/>
</dbReference>
<dbReference type="CDD" id="cd01013">
    <property type="entry name" value="isochorismatase"/>
    <property type="match status" value="1"/>
</dbReference>
<dbReference type="Gene3D" id="1.10.1200.10">
    <property type="entry name" value="ACP-like"/>
    <property type="match status" value="1"/>
</dbReference>
<dbReference type="Gene3D" id="3.40.50.850">
    <property type="entry name" value="Isochorismatase-like"/>
    <property type="match status" value="1"/>
</dbReference>
<dbReference type="InterPro" id="IPR036736">
    <property type="entry name" value="ACP-like_sf"/>
</dbReference>
<dbReference type="InterPro" id="IPR016291">
    <property type="entry name" value="Isochorismatase"/>
</dbReference>
<dbReference type="InterPro" id="IPR000868">
    <property type="entry name" value="Isochorismatase-like_dom"/>
</dbReference>
<dbReference type="InterPro" id="IPR050272">
    <property type="entry name" value="Isochorismatase-like_hydrls"/>
</dbReference>
<dbReference type="InterPro" id="IPR036380">
    <property type="entry name" value="Isochorismatase-like_sf"/>
</dbReference>
<dbReference type="InterPro" id="IPR009081">
    <property type="entry name" value="PP-bd_ACP"/>
</dbReference>
<dbReference type="PANTHER" id="PTHR43540:SF3">
    <property type="entry name" value="ENTEROBACTIN SYNTHASE COMPONENT B"/>
    <property type="match status" value="1"/>
</dbReference>
<dbReference type="PANTHER" id="PTHR43540">
    <property type="entry name" value="PEROXYUREIDOACRYLATE/UREIDOACRYLATE AMIDOHYDROLASE-RELATED"/>
    <property type="match status" value="1"/>
</dbReference>
<dbReference type="Pfam" id="PF00857">
    <property type="entry name" value="Isochorismatase"/>
    <property type="match status" value="1"/>
</dbReference>
<dbReference type="Pfam" id="PF00550">
    <property type="entry name" value="PP-binding"/>
    <property type="match status" value="1"/>
</dbReference>
<dbReference type="PIRSF" id="PIRSF001111">
    <property type="entry name" value="Isochorismatase"/>
    <property type="match status" value="1"/>
</dbReference>
<dbReference type="PRINTS" id="PR01398">
    <property type="entry name" value="ISCHRISMTASE"/>
</dbReference>
<dbReference type="SUPFAM" id="SSF47336">
    <property type="entry name" value="ACP-like"/>
    <property type="match status" value="1"/>
</dbReference>
<dbReference type="SUPFAM" id="SSF52499">
    <property type="entry name" value="Isochorismatase-like hydrolases"/>
    <property type="match status" value="1"/>
</dbReference>
<dbReference type="PROSITE" id="PS50075">
    <property type="entry name" value="CARRIER"/>
    <property type="match status" value="1"/>
</dbReference>
<feature type="chain" id="PRO_0000201827" description="Vibriobactin-specific isochorismatase">
    <location>
        <begin position="1"/>
        <end position="293"/>
    </location>
</feature>
<feature type="domain" description="Carrier" evidence="2">
    <location>
        <begin position="211"/>
        <end position="287"/>
    </location>
</feature>
<feature type="modified residue" description="O-(pantetheine 4'-phosphoryl)serine" evidence="2">
    <location>
        <position position="248"/>
    </location>
</feature>
<feature type="turn" evidence="4">
    <location>
        <begin position="26"/>
        <end position="28"/>
    </location>
</feature>
<feature type="strand" evidence="4">
    <location>
        <begin position="29"/>
        <end position="34"/>
    </location>
</feature>
<feature type="helix" evidence="4">
    <location>
        <begin position="38"/>
        <end position="41"/>
    </location>
</feature>
<feature type="helix" evidence="4">
    <location>
        <begin position="51"/>
        <end position="68"/>
    </location>
</feature>
<feature type="strand" evidence="4">
    <location>
        <begin position="72"/>
        <end position="76"/>
    </location>
</feature>
<feature type="helix" evidence="4">
    <location>
        <begin position="83"/>
        <end position="86"/>
    </location>
</feature>
<feature type="helix" evidence="4">
    <location>
        <begin position="89"/>
        <end position="93"/>
    </location>
</feature>
<feature type="helix" evidence="4">
    <location>
        <begin position="105"/>
        <end position="107"/>
    </location>
</feature>
<feature type="strand" evidence="4">
    <location>
        <begin position="113"/>
        <end position="117"/>
    </location>
</feature>
<feature type="strand" evidence="4">
    <location>
        <begin position="120"/>
        <end position="122"/>
    </location>
</feature>
<feature type="turn" evidence="4">
    <location>
        <begin position="123"/>
        <end position="126"/>
    </location>
</feature>
<feature type="helix" evidence="4">
    <location>
        <begin position="129"/>
        <end position="136"/>
    </location>
</feature>
<feature type="strand" evidence="4">
    <location>
        <begin position="140"/>
        <end position="146"/>
    </location>
</feature>
<feature type="turn" evidence="4">
    <location>
        <begin position="148"/>
        <end position="150"/>
    </location>
</feature>
<feature type="helix" evidence="4">
    <location>
        <begin position="151"/>
        <end position="161"/>
    </location>
</feature>
<feature type="strand" evidence="4">
    <location>
        <begin position="165"/>
        <end position="174"/>
    </location>
</feature>
<feature type="helix" evidence="4">
    <location>
        <begin position="178"/>
        <end position="191"/>
    </location>
</feature>
<feature type="strand" evidence="4">
    <location>
        <begin position="194"/>
        <end position="196"/>
    </location>
</feature>
<feature type="helix" evidence="4">
    <location>
        <begin position="198"/>
        <end position="205"/>
    </location>
</feature>
<protein>
    <recommendedName>
        <fullName>Vibriobactin-specific isochorismatase</fullName>
        <ecNumber>3.3.2.1</ecNumber>
    </recommendedName>
    <alternativeName>
        <fullName>2,3 dihydro-2,3 dihydroxybenzoate synthase</fullName>
    </alternativeName>
    <alternativeName>
        <fullName>Isochorismate lyase-ArCP</fullName>
    </alternativeName>
</protein>
<reference key="1">
    <citation type="journal article" date="1997" name="J. Bacteriol.">
        <title>Cloning of a Vibrio cholerae vibriobactin gene cluster: identification of genes required for early steps in siderophore biosynthesis.</title>
        <authorList>
            <person name="Wyckoff E.E."/>
            <person name="Stoebner J.A."/>
            <person name="Reed K.E."/>
            <person name="Payne S.M."/>
        </authorList>
    </citation>
    <scope>NUCLEOTIDE SEQUENCE [GENOMIC DNA]</scope>
    <source>
        <strain>El Tor Lou15</strain>
    </source>
</reference>
<reference key="2">
    <citation type="journal article" date="2000" name="Nature">
        <title>DNA sequence of both chromosomes of the cholera pathogen Vibrio cholerae.</title>
        <authorList>
            <person name="Heidelberg J.F."/>
            <person name="Eisen J.A."/>
            <person name="Nelson W.C."/>
            <person name="Clayton R.A."/>
            <person name="Gwinn M.L."/>
            <person name="Dodson R.J."/>
            <person name="Haft D.H."/>
            <person name="Hickey E.K."/>
            <person name="Peterson J.D."/>
            <person name="Umayam L.A."/>
            <person name="Gill S.R."/>
            <person name="Nelson K.E."/>
            <person name="Read T.D."/>
            <person name="Tettelin H."/>
            <person name="Richardson D.L."/>
            <person name="Ermolaeva M.D."/>
            <person name="Vamathevan J.J."/>
            <person name="Bass S."/>
            <person name="Qin H."/>
            <person name="Dragoi I."/>
            <person name="Sellers P."/>
            <person name="McDonald L.A."/>
            <person name="Utterback T.R."/>
            <person name="Fleischmann R.D."/>
            <person name="Nierman W.C."/>
            <person name="White O."/>
            <person name="Salzberg S.L."/>
            <person name="Smith H.O."/>
            <person name="Colwell R.R."/>
            <person name="Mekalanos J.J."/>
            <person name="Venter J.C."/>
            <person name="Fraser C.M."/>
        </authorList>
    </citation>
    <scope>NUCLEOTIDE SEQUENCE [LARGE SCALE GENOMIC DNA]</scope>
    <source>
        <strain>ATCC 39315 / El Tor Inaba N16961</strain>
    </source>
</reference>
<comment type="function">
    <text>Involved in the biosynthesis of the catechol siderophore vibriobactin. Vibriobactin is a chelating compound involved in transporting iron from the bacterial environment into the cell cytoplasm.</text>
</comment>
<comment type="catalytic activity">
    <reaction>
        <text>isochorismate + H2O = (2S,3S)-2,3-dihydroxy-2,3-dihydrobenzoate + pyruvate</text>
        <dbReference type="Rhea" id="RHEA:11112"/>
        <dbReference type="ChEBI" id="CHEBI:15361"/>
        <dbReference type="ChEBI" id="CHEBI:15377"/>
        <dbReference type="ChEBI" id="CHEBI:29780"/>
        <dbReference type="ChEBI" id="CHEBI:58764"/>
        <dbReference type="EC" id="3.3.2.1"/>
    </reaction>
</comment>
<comment type="cofactor">
    <cofactor evidence="1">
        <name>pantetheine 4'-phosphate</name>
        <dbReference type="ChEBI" id="CHEBI:47942"/>
    </cofactor>
    <text evidence="1">Binds 1 phosphopantetheine covalently.</text>
</comment>
<comment type="pathway">
    <text>Siderophore biosynthesis; vibriobactin biosynthesis.</text>
</comment>
<comment type="similarity">
    <text evidence="3">Belongs to the isochorismatase family.</text>
</comment>
<sequence length="293" mass="32553">MAIPKIASYPLPVSLPTNKVDWRIDASRAVLLIHDMQEYFVHYFDSQAEPIPSLIKHIQQLKAHAKQAGIPVVYTAQPANQDPAERALLSDFWGPGLSEETAIIAPLAPESGDVQLTKWRYSAFKKSPLLDWLRETGRDQLIITGVYAHIGILSTALDAFMFDIQPFVIGDGVADFSLSDHEFSLRYISGRTGAVKSTQQACLEIAAQHSKLTGLSLRTMQHDVAAALNLSVDEVDVQENLLFLGLDSIRAIQLLEKWKAQGADISFAQLMEHVTLQQWWQTIQANLHQPCSA</sequence>
<accession>P0C6D3</accession>
<accession>O07900</accession>
<accession>Q9JQ11</accession>
<evidence type="ECO:0000250" key="1"/>
<evidence type="ECO:0000255" key="2">
    <source>
        <dbReference type="PROSITE-ProRule" id="PRU00258"/>
    </source>
</evidence>
<evidence type="ECO:0000305" key="3"/>
<evidence type="ECO:0007829" key="4">
    <source>
        <dbReference type="PDB" id="3TG2"/>
    </source>
</evidence>
<organism>
    <name type="scientific">Vibrio cholerae serotype O1 (strain ATCC 39315 / El Tor Inaba N16961)</name>
    <dbReference type="NCBI Taxonomy" id="243277"/>
    <lineage>
        <taxon>Bacteria</taxon>
        <taxon>Pseudomonadati</taxon>
        <taxon>Pseudomonadota</taxon>
        <taxon>Gammaproteobacteria</taxon>
        <taxon>Vibrionales</taxon>
        <taxon>Vibrionaceae</taxon>
        <taxon>Vibrio</taxon>
    </lineage>
</organism>
<gene>
    <name type="primary">vibB</name>
    <name type="ordered locus">VC_0771</name>
</gene>
<name>VIBB_VIBCH</name>